<protein>
    <recommendedName>
        <fullName>Non-structural protein 3d</fullName>
        <shortName>ns3d</shortName>
    </recommendedName>
    <alternativeName>
        <fullName>Accessory protein 3d</fullName>
    </alternativeName>
</protein>
<proteinExistence type="predicted"/>
<evidence type="ECO:0000255" key="1"/>
<evidence type="ECO:0000255" key="2">
    <source>
        <dbReference type="PROSITE-ProRule" id="PRU01311"/>
    </source>
</evidence>
<evidence type="ECO:0000255" key="3">
    <source>
        <dbReference type="PROSITE-ProRule" id="PRU01312"/>
    </source>
</evidence>
<evidence type="ECO:0000305" key="4"/>
<reference key="1">
    <citation type="journal article" date="2006" name="J. Virol.">
        <title>Prevalence and genetic diversity of coronaviruses in bats from China.</title>
        <authorList>
            <person name="Tang X.C."/>
            <person name="Zhang J.X."/>
            <person name="Zhang S.Y."/>
            <person name="Wang P."/>
            <person name="Fan X.H."/>
            <person name="Li L.F."/>
            <person name="Li G."/>
            <person name="Dong B.Q."/>
            <person name="Liu W."/>
            <person name="Cheung C.L."/>
            <person name="Xu K.M."/>
            <person name="Song W.J."/>
            <person name="Vijaykrishna D."/>
            <person name="Poon L.L.M."/>
            <person name="Peiris J.S.M."/>
            <person name="Smith G.J."/>
            <person name="Chen H."/>
            <person name="Guan Y."/>
        </authorList>
    </citation>
    <scope>NUCLEOTIDE SEQUENCE [GENOMIC RNA]</scope>
</reference>
<sequence length="227" mass="25399">MAFSASLFRTKTVHTEDALCPRSAIQAEQPPNIIDCIPVAGYEAALVTNALFLLVLFVFNPLTCKGNWIKAILFYSLLLYNMILAIFLVIDTQHFVSALLLAYVVTFLILWTADRVRLSCAVGSVLPFVDMRSSYIRVDNGNSSVVVPMNHTKHWFIRNFEQSCHCENCFYIHSSSYVECTFISRLKKSILVSVCDFSLGGNVSTVFVPSSDKTVPLHIIAPSKLYV</sequence>
<accession>Q0Q4E9</accession>
<name>NS3D_BC133</name>
<feature type="chain" id="PRO_0000290270" description="Non-structural protein 3d">
    <location>
        <begin position="1"/>
        <end position="227"/>
    </location>
</feature>
<feature type="transmembrane region" description="Helical" evidence="1">
    <location>
        <begin position="39"/>
        <end position="59"/>
    </location>
</feature>
<feature type="transmembrane region" description="Helical" evidence="1">
    <location>
        <begin position="71"/>
        <end position="91"/>
    </location>
</feature>
<feature type="transmembrane region" description="Helical" evidence="1">
    <location>
        <begin position="93"/>
        <end position="113"/>
    </location>
</feature>
<feature type="domain" description="CoV 3a-like viroporin TM" evidence="2">
    <location>
        <begin position="27"/>
        <end position="130"/>
    </location>
</feature>
<feature type="domain" description="CoV 3a-like viroporin CD" evidence="3">
    <location>
        <begin position="134"/>
        <end position="191"/>
    </location>
</feature>
<keyword id="KW-1043">Host membrane</keyword>
<keyword id="KW-0472">Membrane</keyword>
<keyword id="KW-0812">Transmembrane</keyword>
<keyword id="KW-1133">Transmembrane helix</keyword>
<organismHost>
    <name type="scientific">Tylonycteris pachypus</name>
    <name type="common">Lesser bamboo bat</name>
    <name type="synonym">Vespertilio pachypus</name>
    <dbReference type="NCBI Taxonomy" id="258959"/>
</organismHost>
<organism>
    <name type="scientific">Bat coronavirus 133/2005</name>
    <name type="common">BtCoV</name>
    <name type="synonym">BtCoV/133/2005</name>
    <dbReference type="NCBI Taxonomy" id="389230"/>
    <lineage>
        <taxon>Viruses</taxon>
        <taxon>Riboviria</taxon>
        <taxon>Orthornavirae</taxon>
        <taxon>Pisuviricota</taxon>
        <taxon>Pisoniviricetes</taxon>
        <taxon>Nidovirales</taxon>
        <taxon>Cornidovirineae</taxon>
        <taxon>Coronaviridae</taxon>
        <taxon>Orthocoronavirinae</taxon>
        <taxon>Betacoronavirus</taxon>
        <taxon>Merbecovirus</taxon>
        <taxon>Bat coronavirus HKU4</taxon>
    </lineage>
</organism>
<comment type="subcellular location">
    <subcellularLocation>
        <location evidence="4">Host membrane</location>
        <topology evidence="4">Multi-pass membrane protein</topology>
    </subcellularLocation>
</comment>
<dbReference type="EMBL" id="DQ648794">
    <property type="protein sequence ID" value="ABG47055.1"/>
    <property type="molecule type" value="Genomic_RNA"/>
</dbReference>
<dbReference type="Proteomes" id="UP000007449">
    <property type="component" value="Genome"/>
</dbReference>
<dbReference type="GO" id="GO:0033644">
    <property type="term" value="C:host cell membrane"/>
    <property type="evidence" value="ECO:0007669"/>
    <property type="project" value="UniProtKB-SubCell"/>
</dbReference>
<dbReference type="GO" id="GO:0016020">
    <property type="term" value="C:membrane"/>
    <property type="evidence" value="ECO:0007669"/>
    <property type="project" value="UniProtKB-KW"/>
</dbReference>
<dbReference type="CDD" id="cd21645">
    <property type="entry name" value="MERS-CoV-like_ORF5"/>
    <property type="match status" value="1"/>
</dbReference>
<dbReference type="InterPro" id="IPR046446">
    <property type="entry name" value="a/bCoV_VIROPORIN_3A-like_CD"/>
</dbReference>
<dbReference type="InterPro" id="IPR046445">
    <property type="entry name" value="a/bCoV_VIROPORIN_3A-like_TM"/>
</dbReference>
<dbReference type="InterPro" id="IPR044323">
    <property type="entry name" value="MERS-CoV-like_ORF5"/>
</dbReference>
<dbReference type="PROSITE" id="PS51967">
    <property type="entry name" value="COV_VIROPORIN_3A_CD"/>
    <property type="match status" value="1"/>
</dbReference>
<dbReference type="PROSITE" id="PS51966">
    <property type="entry name" value="COV_VIROPORIN_3A_TM"/>
    <property type="match status" value="1"/>
</dbReference>
<gene>
    <name type="ORF">3d</name>
</gene>